<keyword id="KW-0067">ATP-binding</keyword>
<keyword id="KW-0169">Cobalamin biosynthesis</keyword>
<keyword id="KW-0315">Glutamine amidotransferase</keyword>
<keyword id="KW-0436">Ligase</keyword>
<keyword id="KW-0460">Magnesium</keyword>
<keyword id="KW-0547">Nucleotide-binding</keyword>
<keyword id="KW-1185">Reference proteome</keyword>
<comment type="function">
    <text evidence="1">Catalyzes the ATP-dependent amidation of the two carboxylate groups at positions a and c of cobyrinate, using either L-glutamine or ammonia as the nitrogen source.</text>
</comment>
<comment type="catalytic activity">
    <reaction evidence="1">
        <text>cob(II)yrinate + 2 L-glutamine + 2 ATP + 2 H2O = cob(II)yrinate a,c diamide + 2 L-glutamate + 2 ADP + 2 phosphate + 2 H(+)</text>
        <dbReference type="Rhea" id="RHEA:26289"/>
        <dbReference type="ChEBI" id="CHEBI:15377"/>
        <dbReference type="ChEBI" id="CHEBI:15378"/>
        <dbReference type="ChEBI" id="CHEBI:29985"/>
        <dbReference type="ChEBI" id="CHEBI:30616"/>
        <dbReference type="ChEBI" id="CHEBI:43474"/>
        <dbReference type="ChEBI" id="CHEBI:58359"/>
        <dbReference type="ChEBI" id="CHEBI:58537"/>
        <dbReference type="ChEBI" id="CHEBI:58894"/>
        <dbReference type="ChEBI" id="CHEBI:456216"/>
        <dbReference type="EC" id="6.3.5.11"/>
    </reaction>
</comment>
<comment type="cofactor">
    <cofactor evidence="1">
        <name>Mg(2+)</name>
        <dbReference type="ChEBI" id="CHEBI:18420"/>
    </cofactor>
</comment>
<comment type="pathway">
    <text evidence="1">Cofactor biosynthesis; adenosylcobalamin biosynthesis; cob(II)yrinate a,c-diamide from sirohydrochlorin (anaerobic route): step 10/10.</text>
</comment>
<comment type="domain">
    <text evidence="1">Comprises of two domains. The C-terminal domain contains the binding site for glutamine and catalyzes the hydrolysis of this substrate to glutamate and ammonia. The N-terminal domain is anticipated to bind ATP and cobyrinate and catalyzes the ultimate synthesis of the diamide product. The ammonia produced via the glutaminase domain is probably translocated to the adjacent domain via a molecular tunnel, where it reacts with an activated intermediate.</text>
</comment>
<comment type="miscellaneous">
    <text evidence="1">The a and c carboxylates of cobyrinate are activated for nucleophilic attack via formation of a phosphorylated intermediate by ATP. CbiA catalyzes first the amidation of the c-carboxylate, and then that of the a-carboxylate.</text>
</comment>
<comment type="similarity">
    <text evidence="1">Belongs to the CobB/CbiA family.</text>
</comment>
<organism>
    <name type="scientific">Magnetococcus marinus (strain ATCC BAA-1437 / JCM 17883 / MC-1)</name>
    <dbReference type="NCBI Taxonomy" id="156889"/>
    <lineage>
        <taxon>Bacteria</taxon>
        <taxon>Pseudomonadati</taxon>
        <taxon>Pseudomonadota</taxon>
        <taxon>Alphaproteobacteria</taxon>
        <taxon>Magnetococcales</taxon>
        <taxon>Magnetococcaceae</taxon>
        <taxon>Magnetococcus</taxon>
    </lineage>
</organism>
<feature type="chain" id="PRO_1000116430" description="Cobyrinate a,c-diamide synthase">
    <location>
        <begin position="1"/>
        <end position="467"/>
    </location>
</feature>
<feature type="domain" description="GATase cobBQ-type" evidence="1">
    <location>
        <begin position="256"/>
        <end position="449"/>
    </location>
</feature>
<feature type="active site" description="Nucleophile" evidence="1">
    <location>
        <position position="338"/>
    </location>
</feature>
<feature type="site" description="Increases nucleophilicity of active site Cys" evidence="1">
    <location>
        <position position="441"/>
    </location>
</feature>
<sequence length="467" mass="51067">MPYRIPRLFISATRKSSGKTFIAVGLTAALSARGLVVQPFKKGPDYIDPRWHSLAAGRECRNLDDFIMGRPKVLTSFVAHAQGADVAIIEGNLGLFDGQDLEGSDSSAALAKALGAPVLLVVDCKHLARSVAPLVCGHLHFPGGETIVGIILNNVATPRQEKRLREAIERFCPIPILGAIPRSAEIMIDERHLGLVPANEKQGAPHTVETMGRMMESHLDLDRLVALAATATPLALPDNPPALASKAPLVGGRPVRVGYAADQAFSFYYPDNLEALRQNGVELVPFSLLDEQPLPQVDGLYIGGGFPEMFMEHLQQNRATLETIRTRSELGMPIYAECGGLMVLSQRLIWAGKRVELAGALPIEITMHPKPQGYGYMKIHGTGALPWPPVDQEICCHEFHYSKVSKLGEGVRFAYQVTRGSGVDGWHDGILYHNIFASYAHIHVEGAPEWAPFLARFWRERGSFSQP</sequence>
<protein>
    <recommendedName>
        <fullName evidence="1">Cobyrinate a,c-diamide synthase</fullName>
        <ecNumber evidence="1">6.3.5.11</ecNumber>
    </recommendedName>
    <alternativeName>
        <fullName evidence="1">Cobyrinic acid a,c-diamide synthetase</fullName>
    </alternativeName>
</protein>
<name>CBIA_MAGMM</name>
<accession>A0L8B9</accession>
<dbReference type="EC" id="6.3.5.11" evidence="1"/>
<dbReference type="EMBL" id="CP000471">
    <property type="protein sequence ID" value="ABK44212.1"/>
    <property type="molecule type" value="Genomic_DNA"/>
</dbReference>
<dbReference type="RefSeq" id="WP_011713360.1">
    <property type="nucleotide sequence ID" value="NC_008576.1"/>
</dbReference>
<dbReference type="SMR" id="A0L8B9"/>
<dbReference type="STRING" id="156889.Mmc1_1703"/>
<dbReference type="KEGG" id="mgm:Mmc1_1703"/>
<dbReference type="eggNOG" id="COG1797">
    <property type="taxonomic scope" value="Bacteria"/>
</dbReference>
<dbReference type="HOGENOM" id="CLU_022752_2_1_5"/>
<dbReference type="OrthoDB" id="9764035at2"/>
<dbReference type="UniPathway" id="UPA00148">
    <property type="reaction ID" value="UER00231"/>
</dbReference>
<dbReference type="Proteomes" id="UP000002586">
    <property type="component" value="Chromosome"/>
</dbReference>
<dbReference type="GO" id="GO:0005524">
    <property type="term" value="F:ATP binding"/>
    <property type="evidence" value="ECO:0007669"/>
    <property type="project" value="UniProtKB-UniRule"/>
</dbReference>
<dbReference type="GO" id="GO:0042242">
    <property type="term" value="F:cobyrinic acid a,c-diamide synthase activity"/>
    <property type="evidence" value="ECO:0007669"/>
    <property type="project" value="UniProtKB-UniRule"/>
</dbReference>
<dbReference type="GO" id="GO:0009236">
    <property type="term" value="P:cobalamin biosynthetic process"/>
    <property type="evidence" value="ECO:0007669"/>
    <property type="project" value="UniProtKB-UniRule"/>
</dbReference>
<dbReference type="CDD" id="cd05388">
    <property type="entry name" value="CobB_N"/>
    <property type="match status" value="1"/>
</dbReference>
<dbReference type="CDD" id="cd03130">
    <property type="entry name" value="GATase1_CobB"/>
    <property type="match status" value="1"/>
</dbReference>
<dbReference type="Gene3D" id="3.40.50.880">
    <property type="match status" value="1"/>
</dbReference>
<dbReference type="Gene3D" id="3.40.50.300">
    <property type="entry name" value="P-loop containing nucleotide triphosphate hydrolases"/>
    <property type="match status" value="1"/>
</dbReference>
<dbReference type="HAMAP" id="MF_00027">
    <property type="entry name" value="CobB_CbiA"/>
    <property type="match status" value="1"/>
</dbReference>
<dbReference type="InterPro" id="IPR004484">
    <property type="entry name" value="CbiA/CobB_synth"/>
</dbReference>
<dbReference type="InterPro" id="IPR029062">
    <property type="entry name" value="Class_I_gatase-like"/>
</dbReference>
<dbReference type="InterPro" id="IPR002586">
    <property type="entry name" value="CobQ/CobB/MinD/ParA_Nub-bd_dom"/>
</dbReference>
<dbReference type="InterPro" id="IPR011698">
    <property type="entry name" value="GATase_3"/>
</dbReference>
<dbReference type="InterPro" id="IPR027417">
    <property type="entry name" value="P-loop_NTPase"/>
</dbReference>
<dbReference type="NCBIfam" id="TIGR00379">
    <property type="entry name" value="cobB"/>
    <property type="match status" value="1"/>
</dbReference>
<dbReference type="NCBIfam" id="NF002204">
    <property type="entry name" value="PRK01077.1"/>
    <property type="match status" value="1"/>
</dbReference>
<dbReference type="PANTHER" id="PTHR43873">
    <property type="entry name" value="COBYRINATE A,C-DIAMIDE SYNTHASE"/>
    <property type="match status" value="1"/>
</dbReference>
<dbReference type="PANTHER" id="PTHR43873:SF1">
    <property type="entry name" value="COBYRINATE A,C-DIAMIDE SYNTHASE"/>
    <property type="match status" value="1"/>
</dbReference>
<dbReference type="Pfam" id="PF01656">
    <property type="entry name" value="CbiA"/>
    <property type="match status" value="1"/>
</dbReference>
<dbReference type="Pfam" id="PF07685">
    <property type="entry name" value="GATase_3"/>
    <property type="match status" value="1"/>
</dbReference>
<dbReference type="SUPFAM" id="SSF52317">
    <property type="entry name" value="Class I glutamine amidotransferase-like"/>
    <property type="match status" value="1"/>
</dbReference>
<dbReference type="SUPFAM" id="SSF52540">
    <property type="entry name" value="P-loop containing nucleoside triphosphate hydrolases"/>
    <property type="match status" value="1"/>
</dbReference>
<dbReference type="PROSITE" id="PS51274">
    <property type="entry name" value="GATASE_COBBQ"/>
    <property type="match status" value="1"/>
</dbReference>
<gene>
    <name evidence="1" type="primary">cbiA</name>
    <name type="ordered locus">Mmc1_1703</name>
</gene>
<evidence type="ECO:0000255" key="1">
    <source>
        <dbReference type="HAMAP-Rule" id="MF_00027"/>
    </source>
</evidence>
<proteinExistence type="inferred from homology"/>
<reference key="1">
    <citation type="journal article" date="2009" name="Appl. Environ. Microbiol.">
        <title>Complete genome sequence of the chemolithoautotrophic marine magnetotactic coccus strain MC-1.</title>
        <authorList>
            <person name="Schubbe S."/>
            <person name="Williams T.J."/>
            <person name="Xie G."/>
            <person name="Kiss H.E."/>
            <person name="Brettin T.S."/>
            <person name="Martinez D."/>
            <person name="Ross C.A."/>
            <person name="Schuler D."/>
            <person name="Cox B.L."/>
            <person name="Nealson K.H."/>
            <person name="Bazylinski D.A."/>
        </authorList>
    </citation>
    <scope>NUCLEOTIDE SEQUENCE [LARGE SCALE GENOMIC DNA]</scope>
    <source>
        <strain>ATCC BAA-1437 / JCM 17883 / MC-1</strain>
    </source>
</reference>